<keyword id="KW-0694">RNA-binding</keyword>
<keyword id="KW-0804">Transcription</keyword>
<keyword id="KW-0889">Transcription antitermination</keyword>
<keyword id="KW-0805">Transcription regulation</keyword>
<name>NUSB_YERPA</name>
<feature type="chain" id="PRO_0000265629" description="Transcription antitermination protein NusB">
    <location>
        <begin position="1"/>
        <end position="138"/>
    </location>
</feature>
<proteinExistence type="inferred from homology"/>
<evidence type="ECO:0000255" key="1">
    <source>
        <dbReference type="HAMAP-Rule" id="MF_00073"/>
    </source>
</evidence>
<organism>
    <name type="scientific">Yersinia pestis bv. Antiqua (strain Antiqua)</name>
    <dbReference type="NCBI Taxonomy" id="360102"/>
    <lineage>
        <taxon>Bacteria</taxon>
        <taxon>Pseudomonadati</taxon>
        <taxon>Pseudomonadota</taxon>
        <taxon>Gammaproteobacteria</taxon>
        <taxon>Enterobacterales</taxon>
        <taxon>Yersiniaceae</taxon>
        <taxon>Yersinia</taxon>
    </lineage>
</organism>
<accession>Q1C4I5</accession>
<protein>
    <recommendedName>
        <fullName evidence="1">Transcription antitermination protein NusB</fullName>
    </recommendedName>
    <alternativeName>
        <fullName evidence="1">Antitermination factor NusB</fullName>
    </alternativeName>
</protein>
<reference key="1">
    <citation type="journal article" date="2006" name="J. Bacteriol.">
        <title>Complete genome sequence of Yersinia pestis strains Antiqua and Nepal516: evidence of gene reduction in an emerging pathogen.</title>
        <authorList>
            <person name="Chain P.S.G."/>
            <person name="Hu P."/>
            <person name="Malfatti S.A."/>
            <person name="Radnedge L."/>
            <person name="Larimer F."/>
            <person name="Vergez L.M."/>
            <person name="Worsham P."/>
            <person name="Chu M.C."/>
            <person name="Andersen G.L."/>
        </authorList>
    </citation>
    <scope>NUCLEOTIDE SEQUENCE [LARGE SCALE GENOMIC DNA]</scope>
    <source>
        <strain>Antiqua</strain>
    </source>
</reference>
<sequence length="138" mass="15506">MKPAARRRARECAVQALYSWQLSKNDIADVELQFLSEQDVKDVDIAYFRELLSGVAVNAASLDALMAPFLSRQLEELGQVERAVLRIALFELSKRDDVPYKVAINEAIELAKTFGAEDSHKFVNGVLDKVAPTVRKRK</sequence>
<gene>
    <name evidence="1" type="primary">nusB</name>
    <name type="ordered locus">YPA_2675</name>
</gene>
<comment type="function">
    <text evidence="1">Involved in transcription antitermination. Required for transcription of ribosomal RNA (rRNA) genes. Binds specifically to the boxA antiterminator sequence of the ribosomal RNA (rrn) operons.</text>
</comment>
<comment type="similarity">
    <text evidence="1">Belongs to the NusB family.</text>
</comment>
<dbReference type="EMBL" id="CP000308">
    <property type="protein sequence ID" value="ABG14637.1"/>
    <property type="molecule type" value="Genomic_DNA"/>
</dbReference>
<dbReference type="RefSeq" id="WP_002208665.1">
    <property type="nucleotide sequence ID" value="NZ_CP009906.1"/>
</dbReference>
<dbReference type="SMR" id="Q1C4I5"/>
<dbReference type="GeneID" id="96664444"/>
<dbReference type="KEGG" id="ypa:YPA_2675"/>
<dbReference type="Proteomes" id="UP000001971">
    <property type="component" value="Chromosome"/>
</dbReference>
<dbReference type="GO" id="GO:0005829">
    <property type="term" value="C:cytosol"/>
    <property type="evidence" value="ECO:0007669"/>
    <property type="project" value="TreeGrafter"/>
</dbReference>
<dbReference type="GO" id="GO:0003723">
    <property type="term" value="F:RNA binding"/>
    <property type="evidence" value="ECO:0007669"/>
    <property type="project" value="UniProtKB-UniRule"/>
</dbReference>
<dbReference type="GO" id="GO:0006353">
    <property type="term" value="P:DNA-templated transcription termination"/>
    <property type="evidence" value="ECO:0007669"/>
    <property type="project" value="UniProtKB-UniRule"/>
</dbReference>
<dbReference type="GO" id="GO:0031564">
    <property type="term" value="P:transcription antitermination"/>
    <property type="evidence" value="ECO:0007669"/>
    <property type="project" value="UniProtKB-KW"/>
</dbReference>
<dbReference type="CDD" id="cd00619">
    <property type="entry name" value="Terminator_NusB"/>
    <property type="match status" value="1"/>
</dbReference>
<dbReference type="FunFam" id="1.10.940.10:FF:000001">
    <property type="entry name" value="Transcription antitermination factor NusB"/>
    <property type="match status" value="1"/>
</dbReference>
<dbReference type="Gene3D" id="1.10.940.10">
    <property type="entry name" value="NusB-like"/>
    <property type="match status" value="1"/>
</dbReference>
<dbReference type="HAMAP" id="MF_00073">
    <property type="entry name" value="NusB"/>
    <property type="match status" value="1"/>
</dbReference>
<dbReference type="InterPro" id="IPR035926">
    <property type="entry name" value="NusB-like_sf"/>
</dbReference>
<dbReference type="InterPro" id="IPR011605">
    <property type="entry name" value="NusB_fam"/>
</dbReference>
<dbReference type="InterPro" id="IPR006027">
    <property type="entry name" value="NusB_RsmB_TIM44"/>
</dbReference>
<dbReference type="NCBIfam" id="TIGR01951">
    <property type="entry name" value="nusB"/>
    <property type="match status" value="1"/>
</dbReference>
<dbReference type="PANTHER" id="PTHR11078:SF3">
    <property type="entry name" value="ANTITERMINATION NUSB DOMAIN-CONTAINING PROTEIN"/>
    <property type="match status" value="1"/>
</dbReference>
<dbReference type="PANTHER" id="PTHR11078">
    <property type="entry name" value="N UTILIZATION SUBSTANCE PROTEIN B-RELATED"/>
    <property type="match status" value="1"/>
</dbReference>
<dbReference type="Pfam" id="PF01029">
    <property type="entry name" value="NusB"/>
    <property type="match status" value="1"/>
</dbReference>
<dbReference type="SUPFAM" id="SSF48013">
    <property type="entry name" value="NusB-like"/>
    <property type="match status" value="1"/>
</dbReference>